<feature type="chain" id="PRO_0000365726" description="Intermembrane lipid transfer protein vps13B">
    <location>
        <begin position="1"/>
        <end position="6061"/>
    </location>
</feature>
<feature type="domain" description="Chorein N-terminal" evidence="3">
    <location>
        <begin position="2"/>
        <end position="115"/>
    </location>
</feature>
<feature type="region of interest" description="Disordered" evidence="4">
    <location>
        <begin position="590"/>
        <end position="623"/>
    </location>
</feature>
<feature type="region of interest" description="Disordered" evidence="4">
    <location>
        <begin position="803"/>
        <end position="828"/>
    </location>
</feature>
<feature type="region of interest" description="Disordered" evidence="4">
    <location>
        <begin position="1386"/>
        <end position="1414"/>
    </location>
</feature>
<feature type="region of interest" description="Disordered" evidence="4">
    <location>
        <begin position="1604"/>
        <end position="1644"/>
    </location>
</feature>
<feature type="region of interest" description="Disordered" evidence="4">
    <location>
        <begin position="2747"/>
        <end position="2784"/>
    </location>
</feature>
<feature type="region of interest" description="Disordered" evidence="4">
    <location>
        <begin position="2950"/>
        <end position="2972"/>
    </location>
</feature>
<feature type="region of interest" description="Disordered" evidence="4">
    <location>
        <begin position="3364"/>
        <end position="3401"/>
    </location>
</feature>
<feature type="region of interest" description="Disordered" evidence="4">
    <location>
        <begin position="3855"/>
        <end position="3876"/>
    </location>
</feature>
<feature type="region of interest" description="Disordered" evidence="4">
    <location>
        <begin position="4011"/>
        <end position="4068"/>
    </location>
</feature>
<feature type="region of interest" description="Disordered" evidence="4">
    <location>
        <begin position="4107"/>
        <end position="4132"/>
    </location>
</feature>
<feature type="region of interest" description="Disordered" evidence="4">
    <location>
        <begin position="4262"/>
        <end position="4297"/>
    </location>
</feature>
<feature type="region of interest" description="Disordered" evidence="4">
    <location>
        <begin position="4321"/>
        <end position="4442"/>
    </location>
</feature>
<feature type="region of interest" description="Disordered" evidence="4">
    <location>
        <begin position="4601"/>
        <end position="4631"/>
    </location>
</feature>
<feature type="region of interest" description="Disordered" evidence="4">
    <location>
        <begin position="4753"/>
        <end position="4797"/>
    </location>
</feature>
<feature type="region of interest" description="Disordered" evidence="4">
    <location>
        <begin position="4861"/>
        <end position="4882"/>
    </location>
</feature>
<feature type="region of interest" description="Disordered" evidence="4">
    <location>
        <begin position="5003"/>
        <end position="5030"/>
    </location>
</feature>
<feature type="region of interest" description="Disordered" evidence="4">
    <location>
        <begin position="5372"/>
        <end position="5429"/>
    </location>
</feature>
<feature type="compositionally biased region" description="Basic and acidic residues" evidence="4">
    <location>
        <begin position="595"/>
        <end position="614"/>
    </location>
</feature>
<feature type="compositionally biased region" description="Basic and acidic residues" evidence="4">
    <location>
        <begin position="1395"/>
        <end position="1406"/>
    </location>
</feature>
<feature type="compositionally biased region" description="Polar residues" evidence="4">
    <location>
        <begin position="2747"/>
        <end position="2756"/>
    </location>
</feature>
<feature type="compositionally biased region" description="Acidic residues" evidence="4">
    <location>
        <begin position="2774"/>
        <end position="2784"/>
    </location>
</feature>
<feature type="compositionally biased region" description="Acidic residues" evidence="4">
    <location>
        <begin position="3388"/>
        <end position="3401"/>
    </location>
</feature>
<feature type="compositionally biased region" description="Basic and acidic residues" evidence="4">
    <location>
        <begin position="4015"/>
        <end position="4024"/>
    </location>
</feature>
<feature type="compositionally biased region" description="Low complexity" evidence="4">
    <location>
        <begin position="4031"/>
        <end position="4040"/>
    </location>
</feature>
<feature type="compositionally biased region" description="Acidic residues" evidence="4">
    <location>
        <begin position="4041"/>
        <end position="4057"/>
    </location>
</feature>
<feature type="compositionally biased region" description="Low complexity" evidence="4">
    <location>
        <begin position="4058"/>
        <end position="4068"/>
    </location>
</feature>
<feature type="compositionally biased region" description="Basic and acidic residues" evidence="4">
    <location>
        <begin position="4107"/>
        <end position="4120"/>
    </location>
</feature>
<feature type="compositionally biased region" description="Low complexity" evidence="4">
    <location>
        <begin position="4330"/>
        <end position="4383"/>
    </location>
</feature>
<feature type="compositionally biased region" description="Low complexity" evidence="4">
    <location>
        <begin position="4399"/>
        <end position="4429"/>
    </location>
</feature>
<feature type="compositionally biased region" description="Polar residues" evidence="4">
    <location>
        <begin position="4430"/>
        <end position="4441"/>
    </location>
</feature>
<feature type="compositionally biased region" description="Low complexity" evidence="4">
    <location>
        <begin position="4601"/>
        <end position="4617"/>
    </location>
</feature>
<feature type="compositionally biased region" description="Low complexity" evidence="4">
    <location>
        <begin position="4753"/>
        <end position="4784"/>
    </location>
</feature>
<feature type="compositionally biased region" description="Polar residues" evidence="4">
    <location>
        <begin position="4785"/>
        <end position="4794"/>
    </location>
</feature>
<feature type="compositionally biased region" description="Low complexity" evidence="4">
    <location>
        <begin position="5013"/>
        <end position="5030"/>
    </location>
</feature>
<feature type="compositionally biased region" description="Low complexity" evidence="4">
    <location>
        <begin position="5372"/>
        <end position="5384"/>
    </location>
</feature>
<feature type="compositionally biased region" description="Basic and acidic residues" evidence="4">
    <location>
        <begin position="5385"/>
        <end position="5409"/>
    </location>
</feature>
<feature type="compositionally biased region" description="Low complexity" evidence="4">
    <location>
        <begin position="5410"/>
        <end position="5421"/>
    </location>
</feature>
<proteinExistence type="inferred from homology"/>
<sequence>MFESLVADIIAKYIGEYIKNLSSEQLKINVFSGNVVLKNLEIKGEALQSFKLPLHVQKGIIGTLTLKIPWTNLKSSPVIFDIDCISLYAIPQTGFDYNEEEEKKNQLELKRKKLEKFELIRSFKEGSGADQKTTKQDTFMTSVMTKILNNIQVKIQSFHLRYEEIKGGKVYSLGISFGSLSAFPTDSNWGQSLNENNQQQQQHHQSSLFKYIELTNFSIYLDSEDKKESISKMVEKNDNQLFSNTLKSMIGTTQDTYSKHQYILKPITVRLKIELNRNLDMNIDIPRMKVYCQFDQVSFVIEENQYQSILKLLTTIGNYAQEIKYLKYRPKQRPKQDPKAWWKYVGDVVRESIREKIQQRSWTFIQKRRQNRKEYIKLFKKLQNVDWMEPINEQELKQLSEMEEVHLSFEDIIYFRSLARRELAMETAIADSKKGEFYSSLNRANTSVKQGFFGSWSSWATGNKDSTSSSSSSSSTLPRMNIQLTKEQQAEIEKSMEYDEITLGATIEMPPHYVVNVFEVQIDAVIFTIIGNRGPSENPLIKSYLNNINFKLQQREQGLKLELDLESFNVSDNNNKNNNSLFPYVVTSNPKYKRHQENKENKENQENQENENKNEINNNNNNKKKDNNLFHIIFESKPINSNYDYALSLMLKSLEIIINKQQIERLVEFATPKENVNLFSLSSAALEEFILLKEMTIFQLREVVNHHKTIDLFIDAKAPILIIPEHMYINNNNNNNNENSDNNSSIDTNLIILDLGNFLMQSDISKKPRKSNYSIETPFILNEQITKLIDSQTENELDDNTVDIKNSDNNNNNISDNINNNNNINNKNNINNNKEIEEDDLKISDLYDHYRASLSSIKVLLATHSQDWYLPDENNSKGYQLIEEMSINLHIQSCIEPNELSLSMFKVSGILPQVKVNLSDSSYLKLYHIAKTLGRIHSKTTNTTITAYNHIMDMYSNTQDTFVQQVDAKTTEIKLSDQYKQVLSKRKIFDARFKLEKVLVNIISNQSKLLQLRIGDLQVSLKKKTYDYNGNLLLGSLEVEDCQETCERFNCLITSNSRLLPIIQNNNNNNNNNNNNNNNNNNESCLQLNNNINSSSSLISIHTEMVDRESPHYKLVDTLVDFSFGELNFNYNPKSMGKIICFLDYCFEETFKIQEKFIDQLGNGSTLSNLFHLQSSTPTTPLLESTSQQPLTNPLSKSTLVNNNNNNSNNRVVYNNNNNNIIKAKASIYSLSISLNEEGRELGRFSINQFAIEECTISGRSLDVSGYLESISIDSFLDHPTEGFKILTPKNPGVSMANFKYSTYDNSSSGGGGGGSIINKNKQSLSSSSLPQVEGHQSTQFDKEIQLYLRSIRLTVLVDFILKTKHLIELPFKTVKYDSLYKYQQQQQQQQEEEQQQKEEEQHGGEFDLQNVSSSSPQVKVIDIIGSDQQPIGFKPLKINYKVFLESPQIILSSSDDIHSNHDRIIAELGSVDIKTTILKTNHLIKDSSSSSSSSNSGDCGNEKEIQVQWESIEANLYDMNIRTFKNGQYHQVLHNLSIFNRIDTVLCDGDGKYISFAKLPNQKKINVSIKEIKIEFMDLEHSLILSLTKDVINRITSSLGNNSSNNKLVKSKSSSLSSSTKLLPQLNNDNNNNNNNTNNGTLSSSTSTLFVNTDKEHLTTSINVGIDKFQLILKLDQEKQQQQQQKDHDNDENIIINNDFVTIQLDKISVEMESCKRNDVKTLIKVDDFILLDDRLSDNLRFNKIVEKKKNDNGIGKDEPLINIEFINFKDNNDWESSAIIEFREARVVLSLGLILGIKDFFLLPFVTTLPNEQQQLLLNGNSNQIEIPILSNVLQDLKSILIESTVNNNNNNNNNGDGSSGSKIKKSSKLKLELIAHSPQILLPVSNHSNKLVALDINGDVKLTNSFSPTQIKSFIDSNFYDEFDVESMFITLNGLTFNIYEITTATTTTTTTNNNYSDIKFLSSISKESFDIKVDYSSWDSIYTNTIEMLTCGKQPTIVDVDIFNTFSMRVNEEQYQFFCDMIAHLLRSMDDCPKLKLKKRNPYMLDVLLDQISLLKSTNSTTTTTTISNSLLELKVLEIFGMKVNCKFDKVLIELLSNDGNNNDFSTLILENVLLSIDMATENRPKKMLIEGTVDQLLVYDKRDSDKNSNGRLVLERYSNNNPMMEFSQLMYQSNSPYFPKGQLYSSLLNFNLNHLKAIALPSFSLRVWDWVILTITSVFNTYTIDKYNPINNNNNNNNDDDDIIINNNINNNNSNNINRMKMIVNIPLPIIVLIDESPSLSSLSKQHCNHGKVFVEIKPKSIQISNEFITKVSLGILNSLGNQDNYQDVMNIYLNEFEMNLLTHNGIAESNILKNGNLLVSMENFIQEHQDQNYQTIELTPTSKFTIKTFTSENNDNGILSFKFDQTQYNHFYKCINSVLKRQYEMDSKCNQIYLKPNHKLKPIDMITIINLDCLELLLLSDDDNDGGDGLMDSSVDNVQSEIRIFNLSLENIINSRDETMQVVGLIGNLKVIDSVNQIVIIEPINSNVDRFFTMFKYKTYSRSLKQRQKHLQQLLEDPSLQWDVEFEFNMKSVQFNLSLPNINVPLSIQPFLLSILEKYPIETKSKVQSTLDELSIAEQPPKMKIDINLLYSKVLISPSGKSFTSILTNSSTNISGYDYMVVSFDEVSMKHQPNQFIKLDDLGTIIMDLESINYKVSSLSVEIVLVNKKPYFFLTDIDINASQRTIRNHLEIVNKLHWDGQTNQNNQKNRNPFKFYDQSGASNNNNDNDNDEYDEDQEEISEIYKDQELISKSKISIHSNASQIDLHSNHFQFLWTLYQSIGDIKLNKDQDDDDEDNQEKQNKEKKSNIIGGDKEYLLNFIEFQLKDVKINLINQFNNPILNISLSHLETYLRQIENGSIKLDGSIHSLKILDQRRESTLNSKYKYLLQNYGVDGNSSHNSSGGLNNSFDLNNSGGGNNNNNNSSTKSNILKFSFKPWIYKEDIDDPLFSRNNSSNSINSIENVSITTTTPPPPPSTLPKEFKDKWDQHLIISISNSQITPIFDLFTEIQTSFLPSDLLNKHKENEQDKGGKKSSRIKIDLTMESNQFILPMNFEISNYYLRNEIRKMTISNDYQIIKYFDSSDHHHHQKESSIDSNLMFLEITGFSIDSIMSVLIDSNLPRVNRILRDSNININTRIIDWSSSSSSSKPIKIPSIDTIIDIEHMDFLFCNEEYRFMYDTFNNTLKRYYDFKFLPLPPYKEIDYSFNELISIENQVKCTIQSITMNMLNRQKPNTLATSNNHNHHNSNGTIKPIGQIFLKKLSIDMITCKQNMKLNGTINSMFIRSIKTKENKQSLYLDILKPKYNFNENDIEIENKLNRNSNSDSDNEENHNNNQNNQNNIDDDDGDGDDDDDDDDSIIKFEFISYSEPTSIKGDKSPIKTLWDTQYSVEIGSINLVSKIATLLKIKDFIMEPMVTPFSSAPSNKPSIRDSKDYRSKMYQRLTMKPFTLEIPQSETSTEMVSIEFGTITMSNIYRLFHNNNITINKQIEVLLVDISQFTMYTQRDILSTMVSNSPQMKLEVERLLTLEDRSLQDFKTRAKITNFELIFSADDYLFLYTIFTGNWMFNDEVDSSSHRTPPNPPSLPSWNGVRFVYSPLEHSEQIKVSENQFSSPKGFINLVENRILQSFTLSMDTFNFHMNPIVDPLAILAMNNVILDYNLYRDGIMKTSINLKDVLLLDERNNTDCVFKEILTRKQLNNQNPKTPPHIIIDFLMDPTHNRQFTSIQLDHPMLFVSPNSILPILDFFTSLQQQKEKELQESQQKLQQKLQQKQQHQQQHQQQQQQQQQQQQQQQQQQQQQQQQQQQQQQQQQPIINGDYGGIDSNNRNKKLPPHIRFYLKVTKPKLLLVEDETQQNTNALVMKMPIEFHFSKTSDLNQTMELHASKCQLFRTTPFSDSNNGATSTPITNSFAFTCIFIQFNENDQQTIQIRFQPLNVCLSYKEILMINRLINNLSLTNYQEQLKQQQQQEKEKEIEKERKRKSLLKNNNNISINDNDDDDDDDDNDNDENNNENYEFNFKNNNNEEFYDDFDELTDTTTTSSQRLNEQDKEEIRIQKSFRELEKKKRERKENSKSKSLVAPDRPDESMNLMHKTRVHVEFLGRVSFTLLDESVTMKDIPFVQLNIGEFNSDYWGWEEYSFLSCDMYLKVEVFNQKHMAFDSLVEQFQLNVQVLQSDDPKLKISVKSNSPCNINISQPFIQALANFYQNILKTNASNSSNNNNNNNNNGLSASTSNNLNNTMNDSNNNYNGRNASSNELITFENVDPEEMLFNSISQSISNPNLTTTTTTTTTTTTTTTTSTTINNNNNNNINQFQITTPSSSVINSPNISGINVGSNRSTKNSINHKRNPSLNNNNNNNNNNNNNNNNNNNNNNNNNNNNNNNSNDNQVNFSTSPGWKKPINSGYLHQFDCYNSLTNNIINSKTRDMRSSVDLTMLTRSGASHQRSSHQRSHSRANSNTFNMEMLRSPPVLSSSPTGTSSIPNVLSSSSLNAQTLFTTEGNNQFWIVNLTGKSIEYYVEELNFVQSYSVNDSGSGINNNNNNNNIYNIINLNNSTSSPSSSSNKVNNNYNNMDDEEDKKISKKSLSSSTDKEIHLLRDKEKQALELNSVLFKTRDFRAHGSLNAHVAIRLIDQDSGPSQWIHGVSINQIGDNFYFPPFGNKANLVVCEVGWDEKNESKIATLRSPVLIKNSSNTPIDIQLIHTINNNNNNNNNDVNNNNTNNNNNNNNNNNNNKSNENSQDQPPSIKTQEFGPIRIDENFYIPIDFWNYNCSISIRPHGKDFKFDSIETLELCESSSWPDSHIFTSTKDLINENNAGGSSHYSSNGSNGSFSSISQQQQQKKTENFYLGTMKQSGIRCDRTGLVSTTLIVTPPIIFENVLLCDIEVRIMSHSKRSKVNDTFLKNLVNNGKPATTLSPGKQMPWYSNHGNDVGMTLSLKGLGKDQYFHLPSYIHNSPLATKGKDNNKDNSNNNNNNNNNNNDGIEVGSGLIGGGIDSNSFQHVSFTQEIQFVCTPEYTNTNYTLILKIDHRFEGGCHIASIYCTNAIQNHTMIPFLLRPSNMKLVNALTLETNGDPLMISHDKFYCYHPSAPKIPSKEFDIILGKEDIIEIQFDASKDQMRFQFKAIVSTGFNIFFRTRIVDIYPRFVLVNKLPISLSYTQVNKDLAIMAKDSQLLGPESSIPFHWFNGKEEQQLSISIGQGTSDSSWKWSGGMRIDQIGVNYIKLQHQHDDLIEQSIKVEVRDTSESTMVYFYSNDPQNLPFHIKNETKTIISYQQKHPNSKKYTLKPNEDRYFTWDFPSGERKLTVHYHNDGGINIGNLNNSLNNINNNNNNLNNDNNKNKNNNDKNKNNDKNNKNNNDKNNNDNNNNNNNNNNENQNIGQDTSPIITQDINLNKIKVFKPVKLLKEEIFPIVESSNGTTRDLLFTTKHRVTKELDTLEFAFDISFENLGFSFIDDVPQELIYVAFKDFNFWTSQSNLTETTWLIIDDIQIDNQQPDTDYPVLLWCDKKKESQALPFLEYSAVKMKKKNLKYYDLIALYLNEMYIQLDDKTLLDLNNFYQKIPIHKFNGTIYVDPTSSPSSPQQQQPQTEQPGIIPENFYIKWLIFAEIKIYLTFGISRDGILSNYNKMPALRLVIPSLGKSLGQLENAPLNINQLGVKNIFTTMNNLTQLLSSHYTKQMKRQIHVILGSSNIFGSPLVFFNNISTGMTEAIEDPIMGSIQLMKRILYAAANSSSKLFGTISSGFATWSLDETYLRRRDAEEKVKAKHIAHGFYLGSKGFAMGIIDGVFGIVEHPVRGAMQEGLLGFFKGCGKGVLGIAVKPVTGVFDFASKTSEGIRNNTNIHPERFRLRTPRFINPREPIKEYSVDESEGNFLLKKNSDDINKSEGNPLSSKMEYKFHVVLPDCTLLLTSHSLICLSKKGIYRWSFPLSEISKLVNIVAKCKLNIHLKNYRSFGTFSQLRKKISIHCPNDSILFQLYSKISSCFNRSNRLELEENVADDFGDNSIAMVSRYN</sequence>
<evidence type="ECO:0000250" key="1">
    <source>
        <dbReference type="UniProtKB" id="Q07878"/>
    </source>
</evidence>
<evidence type="ECO:0000250" key="2">
    <source>
        <dbReference type="UniProtKB" id="Q96RL7"/>
    </source>
</evidence>
<evidence type="ECO:0000255" key="3"/>
<evidence type="ECO:0000256" key="4">
    <source>
        <dbReference type="SAM" id="MobiDB-lite"/>
    </source>
</evidence>
<evidence type="ECO:0000305" key="5"/>
<reference key="1">
    <citation type="journal article" date="2002" name="Nature">
        <title>Sequence and analysis of chromosome 2 of Dictyostelium discoideum.</title>
        <authorList>
            <person name="Gloeckner G."/>
            <person name="Eichinger L."/>
            <person name="Szafranski K."/>
            <person name="Pachebat J.A."/>
            <person name="Bankier A.T."/>
            <person name="Dear P.H."/>
            <person name="Lehmann R."/>
            <person name="Baumgart C."/>
            <person name="Parra G."/>
            <person name="Abril J.F."/>
            <person name="Guigo R."/>
            <person name="Kumpf K."/>
            <person name="Tunggal B."/>
            <person name="Cox E.C."/>
            <person name="Quail M.A."/>
            <person name="Platzer M."/>
            <person name="Rosenthal A."/>
            <person name="Noegel A.A."/>
        </authorList>
    </citation>
    <scope>NUCLEOTIDE SEQUENCE [LARGE SCALE GENOMIC DNA]</scope>
    <source>
        <strain>AX4</strain>
    </source>
</reference>
<reference key="2">
    <citation type="journal article" date="2005" name="Nature">
        <title>The genome of the social amoeba Dictyostelium discoideum.</title>
        <authorList>
            <person name="Eichinger L."/>
            <person name="Pachebat J.A."/>
            <person name="Gloeckner G."/>
            <person name="Rajandream M.A."/>
            <person name="Sucgang R."/>
            <person name="Berriman M."/>
            <person name="Song J."/>
            <person name="Olsen R."/>
            <person name="Szafranski K."/>
            <person name="Xu Q."/>
            <person name="Tunggal B."/>
            <person name="Kummerfeld S."/>
            <person name="Madera M."/>
            <person name="Konfortov B.A."/>
            <person name="Rivero F."/>
            <person name="Bankier A.T."/>
            <person name="Lehmann R."/>
            <person name="Hamlin N."/>
            <person name="Davies R."/>
            <person name="Gaudet P."/>
            <person name="Fey P."/>
            <person name="Pilcher K."/>
            <person name="Chen G."/>
            <person name="Saunders D."/>
            <person name="Sodergren E.J."/>
            <person name="Davis P."/>
            <person name="Kerhornou A."/>
            <person name="Nie X."/>
            <person name="Hall N."/>
            <person name="Anjard C."/>
            <person name="Hemphill L."/>
            <person name="Bason N."/>
            <person name="Farbrother P."/>
            <person name="Desany B."/>
            <person name="Just E."/>
            <person name="Morio T."/>
            <person name="Rost R."/>
            <person name="Churcher C.M."/>
            <person name="Cooper J."/>
            <person name="Haydock S."/>
            <person name="van Driessche N."/>
            <person name="Cronin A."/>
            <person name="Goodhead I."/>
            <person name="Muzny D.M."/>
            <person name="Mourier T."/>
            <person name="Pain A."/>
            <person name="Lu M."/>
            <person name="Harper D."/>
            <person name="Lindsay R."/>
            <person name="Hauser H."/>
            <person name="James K.D."/>
            <person name="Quiles M."/>
            <person name="Madan Babu M."/>
            <person name="Saito T."/>
            <person name="Buchrieser C."/>
            <person name="Wardroper A."/>
            <person name="Felder M."/>
            <person name="Thangavelu M."/>
            <person name="Johnson D."/>
            <person name="Knights A."/>
            <person name="Loulseged H."/>
            <person name="Mungall K.L."/>
            <person name="Oliver K."/>
            <person name="Price C."/>
            <person name="Quail M.A."/>
            <person name="Urushihara H."/>
            <person name="Hernandez J."/>
            <person name="Rabbinowitsch E."/>
            <person name="Steffen D."/>
            <person name="Sanders M."/>
            <person name="Ma J."/>
            <person name="Kohara Y."/>
            <person name="Sharp S."/>
            <person name="Simmonds M.N."/>
            <person name="Spiegler S."/>
            <person name="Tivey A."/>
            <person name="Sugano S."/>
            <person name="White B."/>
            <person name="Walker D."/>
            <person name="Woodward J.R."/>
            <person name="Winckler T."/>
            <person name="Tanaka Y."/>
            <person name="Shaulsky G."/>
            <person name="Schleicher M."/>
            <person name="Weinstock G.M."/>
            <person name="Rosenthal A."/>
            <person name="Cox E.C."/>
            <person name="Chisholm R.L."/>
            <person name="Gibbs R.A."/>
            <person name="Loomis W.F."/>
            <person name="Platzer M."/>
            <person name="Kay R.R."/>
            <person name="Williams J.G."/>
            <person name="Dear P.H."/>
            <person name="Noegel A.A."/>
            <person name="Barrell B.G."/>
            <person name="Kuspa A."/>
        </authorList>
    </citation>
    <scope>NUCLEOTIDE SEQUENCE [LARGE SCALE GENOMIC DNA]</scope>
    <source>
        <strain>AX4</strain>
    </source>
</reference>
<keyword id="KW-0472">Membrane</keyword>
<keyword id="KW-0653">Protein transport</keyword>
<keyword id="KW-1185">Reference proteome</keyword>
<keyword id="KW-0813">Transport</keyword>
<protein>
    <recommendedName>
        <fullName evidence="2">Intermembrane lipid transfer protein vps13B</fullName>
    </recommendedName>
    <alternativeName>
        <fullName>Putative vacuolar protein sorting-associated protein 13B</fullName>
    </alternativeName>
</protein>
<dbReference type="EMBL" id="AAFI02000012">
    <property type="protein sequence ID" value="EAL70351.1"/>
    <property type="molecule type" value="Genomic_DNA"/>
</dbReference>
<dbReference type="RefSeq" id="XP_644147.1">
    <property type="nucleotide sequence ID" value="XM_639055.1"/>
</dbReference>
<dbReference type="FunCoup" id="Q555C6">
    <property type="interactions" value="4"/>
</dbReference>
<dbReference type="STRING" id="44689.Q555C6"/>
<dbReference type="PaxDb" id="44689-DDB0234199"/>
<dbReference type="EnsemblProtists" id="EAL70351">
    <property type="protein sequence ID" value="EAL70351"/>
    <property type="gene ID" value="DDB_G0274917"/>
</dbReference>
<dbReference type="GeneID" id="8619576"/>
<dbReference type="KEGG" id="ddi:DDB_G0274917"/>
<dbReference type="dictyBase" id="DDB_G0274917">
    <property type="gene designation" value="vps13B"/>
</dbReference>
<dbReference type="VEuPathDB" id="AmoebaDB:DDB_G0274917"/>
<dbReference type="eggNOG" id="KOG1809">
    <property type="taxonomic scope" value="Eukaryota"/>
</dbReference>
<dbReference type="HOGENOM" id="CLU_223023_0_0_1"/>
<dbReference type="InParanoid" id="Q555C6"/>
<dbReference type="OMA" id="NQKHMAF"/>
<dbReference type="PRO" id="PR:Q555C6"/>
<dbReference type="Proteomes" id="UP000002195">
    <property type="component" value="Chromosome 2"/>
</dbReference>
<dbReference type="GO" id="GO:0016020">
    <property type="term" value="C:membrane"/>
    <property type="evidence" value="ECO:0007669"/>
    <property type="project" value="UniProtKB-SubCell"/>
</dbReference>
<dbReference type="GO" id="GO:0045053">
    <property type="term" value="P:protein retention in Golgi apparatus"/>
    <property type="evidence" value="ECO:0000318"/>
    <property type="project" value="GO_Central"/>
</dbReference>
<dbReference type="GO" id="GO:0006623">
    <property type="term" value="P:protein targeting to vacuole"/>
    <property type="evidence" value="ECO:0000318"/>
    <property type="project" value="GO_Central"/>
</dbReference>
<dbReference type="InterPro" id="IPR026847">
    <property type="entry name" value="VPS13"/>
</dbReference>
<dbReference type="InterPro" id="IPR056748">
    <property type="entry name" value="VPS13-like_C"/>
</dbReference>
<dbReference type="InterPro" id="IPR056747">
    <property type="entry name" value="VPS13-like_M"/>
</dbReference>
<dbReference type="InterPro" id="IPR026854">
    <property type="entry name" value="VPS13_N"/>
</dbReference>
<dbReference type="PANTHER" id="PTHR16166:SF91">
    <property type="entry name" value="INTERMEMBRANE LIPID TRANSFER PROTEIN VPS13B"/>
    <property type="match status" value="1"/>
</dbReference>
<dbReference type="PANTHER" id="PTHR16166">
    <property type="entry name" value="VACUOLAR PROTEIN SORTING-ASSOCIATED PROTEIN VPS13"/>
    <property type="match status" value="1"/>
</dbReference>
<dbReference type="Pfam" id="PF25037">
    <property type="entry name" value="VPS13_C"/>
    <property type="match status" value="1"/>
</dbReference>
<dbReference type="Pfam" id="PF25033">
    <property type="entry name" value="VPS13_M"/>
    <property type="match status" value="2"/>
</dbReference>
<dbReference type="Pfam" id="PF12624">
    <property type="entry name" value="VPS13_N"/>
    <property type="match status" value="1"/>
</dbReference>
<dbReference type="SUPFAM" id="SSF81995">
    <property type="entry name" value="beta-sandwich domain of Sec23/24"/>
    <property type="match status" value="1"/>
</dbReference>
<name>VP13B_DICDI</name>
<accession>Q555C6</accession>
<accession>Q869R6</accession>
<accession>Q869R7</accession>
<gene>
    <name type="primary">vps13B</name>
    <name type="ORF">DDB_G0274917</name>
</gene>
<comment type="function">
    <text evidence="1">Mediates the transfer of lipids between membranes at organelle contact sites.</text>
</comment>
<comment type="subcellular location">
    <subcellularLocation>
        <location evidence="5">Membrane</location>
        <topology evidence="5">Peripheral membrane protein</topology>
    </subcellularLocation>
</comment>
<comment type="similarity">
    <text evidence="5">Belongs to the VPS13 family.</text>
</comment>
<organism>
    <name type="scientific">Dictyostelium discoideum</name>
    <name type="common">Social amoeba</name>
    <dbReference type="NCBI Taxonomy" id="44689"/>
    <lineage>
        <taxon>Eukaryota</taxon>
        <taxon>Amoebozoa</taxon>
        <taxon>Evosea</taxon>
        <taxon>Eumycetozoa</taxon>
        <taxon>Dictyostelia</taxon>
        <taxon>Dictyosteliales</taxon>
        <taxon>Dictyosteliaceae</taxon>
        <taxon>Dictyostelium</taxon>
    </lineage>
</organism>